<name>RHOM1_CAEEL</name>
<proteinExistence type="evidence at transcript level"/>
<reference key="1">
    <citation type="journal article" date="1998" name="Science">
        <title>Genome sequence of the nematode C. elegans: a platform for investigating biology.</title>
        <authorList>
            <consortium name="The C. elegans sequencing consortium"/>
        </authorList>
    </citation>
    <scope>NUCLEOTIDE SEQUENCE [LARGE SCALE GENOMIC DNA]</scope>
    <source>
        <strain>Bristol N2</strain>
    </source>
</reference>
<reference key="2">
    <citation type="journal article" date="2004" name="PLoS Biol.">
        <title>EGF signal propagation during C. elegans vulval development mediated by ROM-1 rhomboid.</title>
        <authorList>
            <person name="Dutt A."/>
            <person name="Canevascini S."/>
            <person name="Froehli-Hoier E."/>
            <person name="Hajnal A."/>
        </authorList>
    </citation>
    <scope>FUNCTION</scope>
    <scope>DEVELOPMENTAL STAGE</scope>
    <scope>DISRUPTION PHENOTYPE</scope>
</reference>
<gene>
    <name evidence="4 6" type="primary">rom-1</name>
    <name evidence="6" type="ORF">F26F4.3</name>
</gene>
<organism>
    <name type="scientific">Caenorhabditis elegans</name>
    <dbReference type="NCBI Taxonomy" id="6239"/>
    <lineage>
        <taxon>Eukaryota</taxon>
        <taxon>Metazoa</taxon>
        <taxon>Ecdysozoa</taxon>
        <taxon>Nematoda</taxon>
        <taxon>Chromadorea</taxon>
        <taxon>Rhabditida</taxon>
        <taxon>Rhabditina</taxon>
        <taxon>Rhabditomorpha</taxon>
        <taxon>Rhabditoidea</taxon>
        <taxon>Rhabditidae</taxon>
        <taxon>Peloderinae</taxon>
        <taxon>Caenorhabditis</taxon>
    </lineage>
</organism>
<comment type="function">
    <text evidence="3">Serine protease which activates lin-3 isoform a in the proximal vulva precursor cells (VPC) during vulva development to transmit the inductive anchor cell signal to the distal VPCs.</text>
</comment>
<comment type="catalytic activity">
    <reaction evidence="1">
        <text>Cleaves type-1 transmembrane domains using a catalytic dyad composed of serine and histidine that are contributed by different transmembrane domains.</text>
        <dbReference type="EC" id="3.4.21.105"/>
    </reaction>
</comment>
<comment type="subcellular location">
    <subcellularLocation>
        <location evidence="5">Membrane</location>
        <topology evidence="5">Multi-pass membrane protein</topology>
    </subcellularLocation>
</comment>
<comment type="developmental stage">
    <text evidence="3">In L1 larvae, expressed in vulval precursor cells (VPCs) and Pn.a-derived neurons. In L2 larvae, uniformly expressed in all VPCs. In L3 larvae, expression decreases in all VPCs except P6.p. In L4 larvae, expression decreases in descendants of P5.p, P6.p and P7.p while expression remains high in descendants of P3.p, P4.p and P8.p. In L4 larvae, expressed in the anchor cell and other cells in the somatic gonad.</text>
</comment>
<comment type="disruption phenotype">
    <text evidence="3">RNAi-mediated knockdown does not affect vulva development. Partially suppresses ectopic vulva formation in a let-60 (n1046) gain-of-function mutant background.</text>
</comment>
<comment type="similarity">
    <text evidence="5">Belongs to the peptidase S54 family.</text>
</comment>
<dbReference type="EC" id="3.4.21.105" evidence="1"/>
<dbReference type="EMBL" id="BX284603">
    <property type="protein sequence ID" value="CCD65751.1"/>
    <property type="molecule type" value="Genomic_DNA"/>
</dbReference>
<dbReference type="PIR" id="T16172">
    <property type="entry name" value="T16172"/>
</dbReference>
<dbReference type="RefSeq" id="NP_498029.2">
    <property type="nucleotide sequence ID" value="NM_065628.2"/>
</dbReference>
<dbReference type="SMR" id="Q19821"/>
<dbReference type="FunCoup" id="Q19821">
    <property type="interactions" value="629"/>
</dbReference>
<dbReference type="STRING" id="6239.F26F4.3.1"/>
<dbReference type="MEROPS" id="S54.013"/>
<dbReference type="PaxDb" id="6239-F26F4.3"/>
<dbReference type="PeptideAtlas" id="Q19821"/>
<dbReference type="EnsemblMetazoa" id="F26F4.3.1">
    <property type="protein sequence ID" value="F26F4.3.1"/>
    <property type="gene ID" value="WBGene00004400"/>
</dbReference>
<dbReference type="GeneID" id="184989"/>
<dbReference type="KEGG" id="cel:CELE_F26F4.3"/>
<dbReference type="UCSC" id="F26F4.3">
    <property type="organism name" value="c. elegans"/>
</dbReference>
<dbReference type="AGR" id="WB:WBGene00004400"/>
<dbReference type="CTD" id="184989"/>
<dbReference type="WormBase" id="F26F4.3">
    <property type="protein sequence ID" value="CE32392"/>
    <property type="gene ID" value="WBGene00004400"/>
    <property type="gene designation" value="rom-1"/>
</dbReference>
<dbReference type="eggNOG" id="KOG2289">
    <property type="taxonomic scope" value="Eukaryota"/>
</dbReference>
<dbReference type="HOGENOM" id="CLU_048023_1_0_1"/>
<dbReference type="InParanoid" id="Q19821"/>
<dbReference type="OMA" id="ELVHKMW"/>
<dbReference type="OrthoDB" id="418595at2759"/>
<dbReference type="PhylomeDB" id="Q19821"/>
<dbReference type="SignaLink" id="Q19821"/>
<dbReference type="PRO" id="PR:Q19821"/>
<dbReference type="Proteomes" id="UP000001940">
    <property type="component" value="Chromosome III"/>
</dbReference>
<dbReference type="Bgee" id="WBGene00004400">
    <property type="expression patterns" value="Expressed in pharyngeal muscle cell (C elegans) and 4 other cell types or tissues"/>
</dbReference>
<dbReference type="GO" id="GO:0016020">
    <property type="term" value="C:membrane"/>
    <property type="evidence" value="ECO:0007669"/>
    <property type="project" value="UniProtKB-SubCell"/>
</dbReference>
<dbReference type="GO" id="GO:0004252">
    <property type="term" value="F:serine-type endopeptidase activity"/>
    <property type="evidence" value="ECO:0000318"/>
    <property type="project" value="GO_Central"/>
</dbReference>
<dbReference type="GO" id="GO:0040026">
    <property type="term" value="P:positive regulation of vulval development"/>
    <property type="evidence" value="ECO:0000316"/>
    <property type="project" value="UniProtKB"/>
</dbReference>
<dbReference type="GO" id="GO:0006508">
    <property type="term" value="P:proteolysis"/>
    <property type="evidence" value="ECO:0007669"/>
    <property type="project" value="UniProtKB-KW"/>
</dbReference>
<dbReference type="FunFam" id="1.20.1540.10:FF:000007">
    <property type="entry name" value="Rhomboid like 2"/>
    <property type="match status" value="1"/>
</dbReference>
<dbReference type="Gene3D" id="1.20.1540.10">
    <property type="entry name" value="Rhomboid-like"/>
    <property type="match status" value="1"/>
</dbReference>
<dbReference type="InterPro" id="IPR022764">
    <property type="entry name" value="Peptidase_S54_rhomboid_dom"/>
</dbReference>
<dbReference type="InterPro" id="IPR017213">
    <property type="entry name" value="Peptidase_S54_rhomboid_met"/>
</dbReference>
<dbReference type="InterPro" id="IPR035952">
    <property type="entry name" value="Rhomboid-like_sf"/>
</dbReference>
<dbReference type="InterPro" id="IPR051739">
    <property type="entry name" value="Rhomboid_IM_Serine_Proteases"/>
</dbReference>
<dbReference type="PANTHER" id="PTHR45840:SF2">
    <property type="entry name" value="PROTEIN RHOMBOID-RELATED"/>
    <property type="match status" value="1"/>
</dbReference>
<dbReference type="PANTHER" id="PTHR45840">
    <property type="entry name" value="RHOMBOID-RELATED PROTEIN"/>
    <property type="match status" value="1"/>
</dbReference>
<dbReference type="Pfam" id="PF01694">
    <property type="entry name" value="Rhomboid"/>
    <property type="match status" value="1"/>
</dbReference>
<dbReference type="PIRSF" id="PIRSF037470">
    <property type="entry name" value="Rhomboid"/>
    <property type="match status" value="1"/>
</dbReference>
<dbReference type="SUPFAM" id="SSF144091">
    <property type="entry name" value="Rhomboid-like"/>
    <property type="match status" value="1"/>
</dbReference>
<sequence length="356" mass="40633">MFSSEGKFRKTYRHQFNQLRTGDETEIPMSTLASRIETRKIPLTNGQIHAIKEAPDELVDIDGFQKIVTSKAAQRSTIKRIMYDMADPIMSDSQKIEVHSYIDSYSWCPPPIFMLLITIIQVGIFFFYWESDGGRSIWTDCAGCFVHHNHTAPGIFIFAPKLRGEAWRFTSYMFLHAGLNHLLGNVIIQLLVGIPLEVAHKIWRIGPIYLLAVTSGSLLQYAIDPNSLLVGASAGVYALIFAHVANVILNWHEMPLRWIRVLVLFVFIFLDFGGAIHRRFYTNDCDSVSHLAHIAGAVTGLFFGYVVLYNVVEHRIEKIIRYVCLFLYSAFFATTIIFVIVRQPYSKNLWNNENCS</sequence>
<keyword id="KW-0378">Hydrolase</keyword>
<keyword id="KW-0472">Membrane</keyword>
<keyword id="KW-0645">Protease</keyword>
<keyword id="KW-1185">Reference proteome</keyword>
<keyword id="KW-0720">Serine protease</keyword>
<keyword id="KW-0812">Transmembrane</keyword>
<keyword id="KW-1133">Transmembrane helix</keyword>
<protein>
    <recommendedName>
        <fullName>Rhomboid-related protein 1</fullName>
        <ecNumber evidence="1">3.4.21.105</ecNumber>
    </recommendedName>
</protein>
<feature type="chain" id="PRO_0000206180" description="Rhomboid-related protein 1">
    <location>
        <begin position="1"/>
        <end position="356"/>
    </location>
</feature>
<feature type="transmembrane region" description="Helical" evidence="2">
    <location>
        <begin position="107"/>
        <end position="129"/>
    </location>
</feature>
<feature type="transmembrane region" description="Helical" evidence="2">
    <location>
        <begin position="172"/>
        <end position="194"/>
    </location>
</feature>
<feature type="transmembrane region" description="Helical" evidence="2">
    <location>
        <begin position="201"/>
        <end position="223"/>
    </location>
</feature>
<feature type="transmembrane region" description="Helical" evidence="2">
    <location>
        <begin position="227"/>
        <end position="249"/>
    </location>
</feature>
<feature type="transmembrane region" description="Helical" evidence="2">
    <location>
        <begin position="256"/>
        <end position="275"/>
    </location>
</feature>
<feature type="transmembrane region" description="Helical" evidence="2">
    <location>
        <begin position="290"/>
        <end position="312"/>
    </location>
</feature>
<feature type="transmembrane region" description="Helical" evidence="2">
    <location>
        <begin position="319"/>
        <end position="341"/>
    </location>
</feature>
<feature type="active site" description="Nucleophile" evidence="1">
    <location>
        <position position="233"/>
    </location>
</feature>
<feature type="active site" evidence="1">
    <location>
        <position position="293"/>
    </location>
</feature>
<accession>Q19821</accession>
<evidence type="ECO:0000250" key="1">
    <source>
        <dbReference type="UniProtKB" id="P20350"/>
    </source>
</evidence>
<evidence type="ECO:0000255" key="2"/>
<evidence type="ECO:0000269" key="3">
    <source>
    </source>
</evidence>
<evidence type="ECO:0000303" key="4">
    <source>
    </source>
</evidence>
<evidence type="ECO:0000305" key="5"/>
<evidence type="ECO:0000312" key="6">
    <source>
        <dbReference type="WormBase" id="F26F4.3"/>
    </source>
</evidence>